<accession>Q10XJ9</accession>
<keyword id="KW-0030">Aminoacyl-tRNA synthetase</keyword>
<keyword id="KW-0067">ATP-binding</keyword>
<keyword id="KW-0963">Cytoplasm</keyword>
<keyword id="KW-0436">Ligase</keyword>
<keyword id="KW-0479">Metal-binding</keyword>
<keyword id="KW-0547">Nucleotide-binding</keyword>
<keyword id="KW-0648">Protein biosynthesis</keyword>
<keyword id="KW-0862">Zinc</keyword>
<name>SYC_TRIEI</name>
<organism>
    <name type="scientific">Trichodesmium erythraeum (strain IMS101)</name>
    <dbReference type="NCBI Taxonomy" id="203124"/>
    <lineage>
        <taxon>Bacteria</taxon>
        <taxon>Bacillati</taxon>
        <taxon>Cyanobacteriota</taxon>
        <taxon>Cyanophyceae</taxon>
        <taxon>Oscillatoriophycideae</taxon>
        <taxon>Oscillatoriales</taxon>
        <taxon>Microcoleaceae</taxon>
        <taxon>Trichodesmium</taxon>
    </lineage>
</organism>
<sequence>MALKLYNSLTRQEETFEPLEPNIIKMYVCGVTVYDYCHLGHARSYIAWDTMRRYLIWQGYQVRYVQNFTDIDDKILKRARETGSSMDSVAKRFTEAYFEDMKRLNVLEADEYPRATQNIDRIQNLIHDLEKKGFAYSSGGDVYYQVREFSQYGKLSGRRLEEMQAGASGRVDSEDLETAKKKDPFDFALWKAAKTGEPAWDSPWGKGRPGWHIECSAMVQDCLGETIDIHAGGADLIFPHHENEIAQSEASTGKILARYWLHNGFVTINGEKMSKSLGNFTTIRDLLDQPVDPMALRMFVLTAQYRKPIDFTEEAIASAKNGWNTIKEGILFPYQYGPKLGWEMPAKNLSDQTLLLTSYLEKFQKAMDDDINTPAALAILFELAKDLRREGNVLIHEGKTETSLEELKKQWVTLVSLSQVLGLEVKIEEQVSNISEGLSNIEIESLIQQRLEAKKAKNYSEADRIRNELQSQGIKLIDKSGGLTNWHRN</sequence>
<dbReference type="EC" id="6.1.1.16" evidence="1"/>
<dbReference type="EMBL" id="CP000393">
    <property type="protein sequence ID" value="ABG53025.1"/>
    <property type="molecule type" value="Genomic_DNA"/>
</dbReference>
<dbReference type="RefSeq" id="WP_011613355.1">
    <property type="nucleotide sequence ID" value="NC_008312.1"/>
</dbReference>
<dbReference type="SMR" id="Q10XJ9"/>
<dbReference type="STRING" id="203124.Tery_4002"/>
<dbReference type="KEGG" id="ter:Tery_4002"/>
<dbReference type="eggNOG" id="COG0215">
    <property type="taxonomic scope" value="Bacteria"/>
</dbReference>
<dbReference type="HOGENOM" id="CLU_013528_0_1_3"/>
<dbReference type="OrthoDB" id="9815130at2"/>
<dbReference type="GO" id="GO:0005829">
    <property type="term" value="C:cytosol"/>
    <property type="evidence" value="ECO:0007669"/>
    <property type="project" value="TreeGrafter"/>
</dbReference>
<dbReference type="GO" id="GO:0005524">
    <property type="term" value="F:ATP binding"/>
    <property type="evidence" value="ECO:0007669"/>
    <property type="project" value="UniProtKB-UniRule"/>
</dbReference>
<dbReference type="GO" id="GO:0004817">
    <property type="term" value="F:cysteine-tRNA ligase activity"/>
    <property type="evidence" value="ECO:0007669"/>
    <property type="project" value="UniProtKB-UniRule"/>
</dbReference>
<dbReference type="GO" id="GO:0008270">
    <property type="term" value="F:zinc ion binding"/>
    <property type="evidence" value="ECO:0007669"/>
    <property type="project" value="UniProtKB-UniRule"/>
</dbReference>
<dbReference type="GO" id="GO:0006423">
    <property type="term" value="P:cysteinyl-tRNA aminoacylation"/>
    <property type="evidence" value="ECO:0007669"/>
    <property type="project" value="UniProtKB-UniRule"/>
</dbReference>
<dbReference type="CDD" id="cd00672">
    <property type="entry name" value="CysRS_core"/>
    <property type="match status" value="1"/>
</dbReference>
<dbReference type="FunFam" id="3.40.50.620:FF:000009">
    <property type="entry name" value="Cysteine--tRNA ligase"/>
    <property type="match status" value="1"/>
</dbReference>
<dbReference type="Gene3D" id="1.20.120.1910">
    <property type="entry name" value="Cysteine-tRNA ligase, C-terminal anti-codon recognition domain"/>
    <property type="match status" value="1"/>
</dbReference>
<dbReference type="Gene3D" id="3.40.50.620">
    <property type="entry name" value="HUPs"/>
    <property type="match status" value="1"/>
</dbReference>
<dbReference type="HAMAP" id="MF_00041">
    <property type="entry name" value="Cys_tRNA_synth"/>
    <property type="match status" value="1"/>
</dbReference>
<dbReference type="InterPro" id="IPR015803">
    <property type="entry name" value="Cys-tRNA-ligase"/>
</dbReference>
<dbReference type="InterPro" id="IPR015273">
    <property type="entry name" value="Cys-tRNA-synt_Ia_DALR"/>
</dbReference>
<dbReference type="InterPro" id="IPR024909">
    <property type="entry name" value="Cys-tRNA/MSH_ligase"/>
</dbReference>
<dbReference type="InterPro" id="IPR014729">
    <property type="entry name" value="Rossmann-like_a/b/a_fold"/>
</dbReference>
<dbReference type="InterPro" id="IPR032678">
    <property type="entry name" value="tRNA-synt_1_cat_dom"/>
</dbReference>
<dbReference type="InterPro" id="IPR009080">
    <property type="entry name" value="tRNAsynth_Ia_anticodon-bd"/>
</dbReference>
<dbReference type="NCBIfam" id="TIGR00435">
    <property type="entry name" value="cysS"/>
    <property type="match status" value="1"/>
</dbReference>
<dbReference type="PANTHER" id="PTHR10890:SF3">
    <property type="entry name" value="CYSTEINE--TRNA LIGASE, CYTOPLASMIC"/>
    <property type="match status" value="1"/>
</dbReference>
<dbReference type="PANTHER" id="PTHR10890">
    <property type="entry name" value="CYSTEINYL-TRNA SYNTHETASE"/>
    <property type="match status" value="1"/>
</dbReference>
<dbReference type="Pfam" id="PF09190">
    <property type="entry name" value="DALR_2"/>
    <property type="match status" value="1"/>
</dbReference>
<dbReference type="Pfam" id="PF01406">
    <property type="entry name" value="tRNA-synt_1e"/>
    <property type="match status" value="1"/>
</dbReference>
<dbReference type="PRINTS" id="PR00983">
    <property type="entry name" value="TRNASYNTHCYS"/>
</dbReference>
<dbReference type="SMART" id="SM00840">
    <property type="entry name" value="DALR_2"/>
    <property type="match status" value="1"/>
</dbReference>
<dbReference type="SUPFAM" id="SSF47323">
    <property type="entry name" value="Anticodon-binding domain of a subclass of class I aminoacyl-tRNA synthetases"/>
    <property type="match status" value="1"/>
</dbReference>
<dbReference type="SUPFAM" id="SSF52374">
    <property type="entry name" value="Nucleotidylyl transferase"/>
    <property type="match status" value="1"/>
</dbReference>
<comment type="catalytic activity">
    <reaction evidence="1">
        <text>tRNA(Cys) + L-cysteine + ATP = L-cysteinyl-tRNA(Cys) + AMP + diphosphate</text>
        <dbReference type="Rhea" id="RHEA:17773"/>
        <dbReference type="Rhea" id="RHEA-COMP:9661"/>
        <dbReference type="Rhea" id="RHEA-COMP:9679"/>
        <dbReference type="ChEBI" id="CHEBI:30616"/>
        <dbReference type="ChEBI" id="CHEBI:33019"/>
        <dbReference type="ChEBI" id="CHEBI:35235"/>
        <dbReference type="ChEBI" id="CHEBI:78442"/>
        <dbReference type="ChEBI" id="CHEBI:78517"/>
        <dbReference type="ChEBI" id="CHEBI:456215"/>
        <dbReference type="EC" id="6.1.1.16"/>
    </reaction>
</comment>
<comment type="cofactor">
    <cofactor evidence="1">
        <name>Zn(2+)</name>
        <dbReference type="ChEBI" id="CHEBI:29105"/>
    </cofactor>
    <text evidence="1">Binds 1 zinc ion per subunit.</text>
</comment>
<comment type="subunit">
    <text evidence="1">Monomer.</text>
</comment>
<comment type="subcellular location">
    <subcellularLocation>
        <location evidence="1">Cytoplasm</location>
    </subcellularLocation>
</comment>
<comment type="similarity">
    <text evidence="1">Belongs to the class-I aminoacyl-tRNA synthetase family.</text>
</comment>
<gene>
    <name evidence="1" type="primary">cysS</name>
    <name type="ordered locus">Tery_4002</name>
</gene>
<evidence type="ECO:0000255" key="1">
    <source>
        <dbReference type="HAMAP-Rule" id="MF_00041"/>
    </source>
</evidence>
<feature type="chain" id="PRO_1000071080" description="Cysteine--tRNA ligase">
    <location>
        <begin position="1"/>
        <end position="489"/>
    </location>
</feature>
<feature type="short sequence motif" description="'HIGH' region">
    <location>
        <begin position="31"/>
        <end position="41"/>
    </location>
</feature>
<feature type="short sequence motif" description="'KMSKS' region">
    <location>
        <begin position="272"/>
        <end position="276"/>
    </location>
</feature>
<feature type="binding site" evidence="1">
    <location>
        <position position="29"/>
    </location>
    <ligand>
        <name>Zn(2+)</name>
        <dbReference type="ChEBI" id="CHEBI:29105"/>
    </ligand>
</feature>
<feature type="binding site" evidence="1">
    <location>
        <position position="215"/>
    </location>
    <ligand>
        <name>Zn(2+)</name>
        <dbReference type="ChEBI" id="CHEBI:29105"/>
    </ligand>
</feature>
<feature type="binding site" evidence="1">
    <location>
        <position position="240"/>
    </location>
    <ligand>
        <name>Zn(2+)</name>
        <dbReference type="ChEBI" id="CHEBI:29105"/>
    </ligand>
</feature>
<feature type="binding site" evidence="1">
    <location>
        <position position="244"/>
    </location>
    <ligand>
        <name>Zn(2+)</name>
        <dbReference type="ChEBI" id="CHEBI:29105"/>
    </ligand>
</feature>
<feature type="binding site" evidence="1">
    <location>
        <position position="275"/>
    </location>
    <ligand>
        <name>ATP</name>
        <dbReference type="ChEBI" id="CHEBI:30616"/>
    </ligand>
</feature>
<proteinExistence type="inferred from homology"/>
<reference key="1">
    <citation type="journal article" date="2015" name="Proc. Natl. Acad. Sci. U.S.A.">
        <title>Trichodesmium genome maintains abundant, widespread noncoding DNA in situ, despite oligotrophic lifestyle.</title>
        <authorList>
            <person name="Walworth N."/>
            <person name="Pfreundt U."/>
            <person name="Nelson W.C."/>
            <person name="Mincer T."/>
            <person name="Heidelberg J.F."/>
            <person name="Fu F."/>
            <person name="Waterbury J.B."/>
            <person name="Glavina del Rio T."/>
            <person name="Goodwin L."/>
            <person name="Kyrpides N.C."/>
            <person name="Land M.L."/>
            <person name="Woyke T."/>
            <person name="Hutchins D.A."/>
            <person name="Hess W.R."/>
            <person name="Webb E.A."/>
        </authorList>
    </citation>
    <scope>NUCLEOTIDE SEQUENCE [LARGE SCALE GENOMIC DNA]</scope>
    <source>
        <strain>IMS101</strain>
    </source>
</reference>
<protein>
    <recommendedName>
        <fullName evidence="1">Cysteine--tRNA ligase</fullName>
        <ecNumber evidence="1">6.1.1.16</ecNumber>
    </recommendedName>
    <alternativeName>
        <fullName evidence="1">Cysteinyl-tRNA synthetase</fullName>
        <shortName evidence="1">CysRS</shortName>
    </alternativeName>
</protein>